<evidence type="ECO:0000255" key="1">
    <source>
        <dbReference type="HAMAP-Rule" id="MF_01368"/>
    </source>
</evidence>
<evidence type="ECO:0000305" key="2"/>
<dbReference type="EMBL" id="AL935263">
    <property type="protein sequence ID" value="CCC78471.1"/>
    <property type="molecule type" value="Genomic_DNA"/>
</dbReference>
<dbReference type="RefSeq" id="WP_003641268.1">
    <property type="nucleotide sequence ID" value="NC_004567.2"/>
</dbReference>
<dbReference type="RefSeq" id="YP_004888985.1">
    <property type="nucleotide sequence ID" value="NC_004567.2"/>
</dbReference>
<dbReference type="SMR" id="Q88XV9"/>
<dbReference type="STRING" id="220668.lp_1063"/>
<dbReference type="EnsemblBacteria" id="CCC78471">
    <property type="protein sequence ID" value="CCC78471"/>
    <property type="gene ID" value="lp_1063"/>
</dbReference>
<dbReference type="GeneID" id="79806712"/>
<dbReference type="KEGG" id="lpl:lp_1063"/>
<dbReference type="PATRIC" id="fig|220668.9.peg.898"/>
<dbReference type="eggNOG" id="COG0203">
    <property type="taxonomic scope" value="Bacteria"/>
</dbReference>
<dbReference type="HOGENOM" id="CLU_074407_2_2_9"/>
<dbReference type="OrthoDB" id="9809073at2"/>
<dbReference type="PhylomeDB" id="Q88XV9"/>
<dbReference type="Proteomes" id="UP000000432">
    <property type="component" value="Chromosome"/>
</dbReference>
<dbReference type="GO" id="GO:0022625">
    <property type="term" value="C:cytosolic large ribosomal subunit"/>
    <property type="evidence" value="ECO:0007669"/>
    <property type="project" value="TreeGrafter"/>
</dbReference>
<dbReference type="GO" id="GO:0003735">
    <property type="term" value="F:structural constituent of ribosome"/>
    <property type="evidence" value="ECO:0007669"/>
    <property type="project" value="InterPro"/>
</dbReference>
<dbReference type="GO" id="GO:0006412">
    <property type="term" value="P:translation"/>
    <property type="evidence" value="ECO:0007669"/>
    <property type="project" value="UniProtKB-UniRule"/>
</dbReference>
<dbReference type="FunFam" id="3.90.1030.10:FF:000002">
    <property type="entry name" value="50S ribosomal protein L17"/>
    <property type="match status" value="1"/>
</dbReference>
<dbReference type="Gene3D" id="3.90.1030.10">
    <property type="entry name" value="Ribosomal protein L17"/>
    <property type="match status" value="1"/>
</dbReference>
<dbReference type="HAMAP" id="MF_01368">
    <property type="entry name" value="Ribosomal_bL17"/>
    <property type="match status" value="1"/>
</dbReference>
<dbReference type="InterPro" id="IPR000456">
    <property type="entry name" value="Ribosomal_bL17"/>
</dbReference>
<dbReference type="InterPro" id="IPR036373">
    <property type="entry name" value="Ribosomal_bL17_sf"/>
</dbReference>
<dbReference type="NCBIfam" id="TIGR00059">
    <property type="entry name" value="L17"/>
    <property type="match status" value="1"/>
</dbReference>
<dbReference type="PANTHER" id="PTHR14413:SF16">
    <property type="entry name" value="LARGE RIBOSOMAL SUBUNIT PROTEIN BL17M"/>
    <property type="match status" value="1"/>
</dbReference>
<dbReference type="PANTHER" id="PTHR14413">
    <property type="entry name" value="RIBOSOMAL PROTEIN L17"/>
    <property type="match status" value="1"/>
</dbReference>
<dbReference type="Pfam" id="PF01196">
    <property type="entry name" value="Ribosomal_L17"/>
    <property type="match status" value="1"/>
</dbReference>
<dbReference type="SUPFAM" id="SSF64263">
    <property type="entry name" value="Prokaryotic ribosomal protein L17"/>
    <property type="match status" value="1"/>
</dbReference>
<accession>Q88XV9</accession>
<accession>F9UMN2</accession>
<organism>
    <name type="scientific">Lactiplantibacillus plantarum (strain ATCC BAA-793 / NCIMB 8826 / WCFS1)</name>
    <name type="common">Lactobacillus plantarum</name>
    <dbReference type="NCBI Taxonomy" id="220668"/>
    <lineage>
        <taxon>Bacteria</taxon>
        <taxon>Bacillati</taxon>
        <taxon>Bacillota</taxon>
        <taxon>Bacilli</taxon>
        <taxon>Lactobacillales</taxon>
        <taxon>Lactobacillaceae</taxon>
        <taxon>Lactiplantibacillus</taxon>
    </lineage>
</organism>
<gene>
    <name evidence="1" type="primary">rplQ</name>
    <name type="ordered locus">lp_1063</name>
</gene>
<feature type="chain" id="PRO_1000055856" description="Large ribosomal subunit protein bL17">
    <location>
        <begin position="1"/>
        <end position="127"/>
    </location>
</feature>
<reference key="1">
    <citation type="journal article" date="2003" name="Proc. Natl. Acad. Sci. U.S.A.">
        <title>Complete genome sequence of Lactobacillus plantarum WCFS1.</title>
        <authorList>
            <person name="Kleerebezem M."/>
            <person name="Boekhorst J."/>
            <person name="van Kranenburg R."/>
            <person name="Molenaar D."/>
            <person name="Kuipers O.P."/>
            <person name="Leer R."/>
            <person name="Tarchini R."/>
            <person name="Peters S.A."/>
            <person name="Sandbrink H.M."/>
            <person name="Fiers M.W.E.J."/>
            <person name="Stiekema W."/>
            <person name="Klein Lankhorst R.M."/>
            <person name="Bron P.A."/>
            <person name="Hoffer S.M."/>
            <person name="Nierop Groot M.N."/>
            <person name="Kerkhoven R."/>
            <person name="De Vries M."/>
            <person name="Ursing B."/>
            <person name="De Vos W.M."/>
            <person name="Siezen R.J."/>
        </authorList>
    </citation>
    <scope>NUCLEOTIDE SEQUENCE [LARGE SCALE GENOMIC DNA]</scope>
    <source>
        <strain>ATCC BAA-793 / NCIMB 8826 / WCFS1</strain>
    </source>
</reference>
<reference key="2">
    <citation type="journal article" date="2012" name="J. Bacteriol.">
        <title>Complete resequencing and reannotation of the Lactobacillus plantarum WCFS1 genome.</title>
        <authorList>
            <person name="Siezen R.J."/>
            <person name="Francke C."/>
            <person name="Renckens B."/>
            <person name="Boekhorst J."/>
            <person name="Wels M."/>
            <person name="Kleerebezem M."/>
            <person name="van Hijum S.A."/>
        </authorList>
    </citation>
    <scope>NUCLEOTIDE SEQUENCE [LARGE SCALE GENOMIC DNA]</scope>
    <scope>GENOME REANNOTATION</scope>
    <source>
        <strain>ATCC BAA-793 / NCIMB 8826 / WCFS1</strain>
    </source>
</reference>
<proteinExistence type="inferred from homology"/>
<comment type="subunit">
    <text evidence="1">Part of the 50S ribosomal subunit. Contacts protein L32.</text>
</comment>
<comment type="similarity">
    <text evidence="1">Belongs to the bacterial ribosomal protein bL17 family.</text>
</comment>
<protein>
    <recommendedName>
        <fullName evidence="1">Large ribosomal subunit protein bL17</fullName>
    </recommendedName>
    <alternativeName>
        <fullName evidence="2">50S ribosomal protein L17</fullName>
    </alternativeName>
</protein>
<keyword id="KW-1185">Reference proteome</keyword>
<keyword id="KW-0687">Ribonucleoprotein</keyword>
<keyword id="KW-0689">Ribosomal protein</keyword>
<name>RL17_LACPL</name>
<sequence length="127" mass="14166">MSYRKLQRTSSQRRALLRDLTTSLIVNGKIETTEARAKEVRSTADKMISLAKKGDLSARRKAAAFMRDVVADVKEDGDNVAVQTALQKLFSDLGPQYADRNGGYTRIYKTMPRRGDGAQMVVLELVD</sequence>